<accession>P35266</accession>
<evidence type="ECO:0000305" key="1"/>
<reference key="1">
    <citation type="journal article" date="1991" name="Curr. Genet.">
        <title>A small gene family in barley encodes ribosomal proteins homologous to yeast YL17 and L22 from archaebacteria, eubacteria, and chloroplasts.</title>
        <authorList>
            <person name="Madsen L.H."/>
            <person name="Kreiberg J.D."/>
            <person name="Gausing K."/>
        </authorList>
    </citation>
    <scope>NUCLEOTIDE SEQUENCE [MRNA]</scope>
    <source>
        <strain>cv. Bomi</strain>
        <tissue>Leaf</tissue>
    </source>
</reference>
<name>RL171_HORVU</name>
<proteinExistence type="evidence at transcript level"/>
<sequence length="170" mass="19504">MVKYSTDPANPTKSAKAMGRDLRVHFKNTRETAFALRKMPLNKAKRYLEDVLAHKQAIPFRRYCRGVGRTAQVKNRQPNGQGRWPAKSAKFVLDLLKNAESNAEVKGLDVDALYISHIQVNQAQKQRRRTYRAHGRINPYMSNPCHIELILSEKEEPVKKEAESHIARKA</sequence>
<keyword id="KW-0687">Ribonucleoprotein</keyword>
<keyword id="KW-0689">Ribosomal protein</keyword>
<feature type="chain" id="PRO_0000125338" description="Large ribosomal subunit protein uL22z">
    <location>
        <begin position="1"/>
        <end position="170"/>
    </location>
</feature>
<dbReference type="EMBL" id="X62724">
    <property type="protein sequence ID" value="CAA44598.1"/>
    <property type="molecule type" value="mRNA"/>
</dbReference>
<dbReference type="PIR" id="S32578">
    <property type="entry name" value="S32578"/>
</dbReference>
<dbReference type="SMR" id="P35266"/>
<dbReference type="ExpressionAtlas" id="P35266">
    <property type="expression patterns" value="baseline and differential"/>
</dbReference>
<dbReference type="GO" id="GO:0022625">
    <property type="term" value="C:cytosolic large ribosomal subunit"/>
    <property type="evidence" value="ECO:0007669"/>
    <property type="project" value="TreeGrafter"/>
</dbReference>
<dbReference type="GO" id="GO:0003735">
    <property type="term" value="F:structural constituent of ribosome"/>
    <property type="evidence" value="ECO:0007669"/>
    <property type="project" value="InterPro"/>
</dbReference>
<dbReference type="GO" id="GO:0002181">
    <property type="term" value="P:cytoplasmic translation"/>
    <property type="evidence" value="ECO:0007669"/>
    <property type="project" value="TreeGrafter"/>
</dbReference>
<dbReference type="GO" id="GO:0061484">
    <property type="term" value="P:hematopoietic stem cell homeostasis"/>
    <property type="evidence" value="ECO:0000316"/>
    <property type="project" value="MGI"/>
</dbReference>
<dbReference type="CDD" id="cd00336">
    <property type="entry name" value="Ribosomal_L22"/>
    <property type="match status" value="1"/>
</dbReference>
<dbReference type="FunFam" id="3.90.470.10:FF:000005">
    <property type="entry name" value="60S ribosomal protein L17"/>
    <property type="match status" value="1"/>
</dbReference>
<dbReference type="Gene3D" id="3.90.470.10">
    <property type="entry name" value="Ribosomal protein L22/L17"/>
    <property type="match status" value="1"/>
</dbReference>
<dbReference type="HAMAP" id="MF_01331_A">
    <property type="entry name" value="Ribosomal_uL22_A"/>
    <property type="match status" value="1"/>
</dbReference>
<dbReference type="InterPro" id="IPR001063">
    <property type="entry name" value="Ribosomal_uL22"/>
</dbReference>
<dbReference type="InterPro" id="IPR018260">
    <property type="entry name" value="Ribosomal_uL22_CS"/>
</dbReference>
<dbReference type="InterPro" id="IPR005721">
    <property type="entry name" value="Ribosomal_uL22_euk/arc"/>
</dbReference>
<dbReference type="InterPro" id="IPR036394">
    <property type="entry name" value="Ribosomal_uL22_sf"/>
</dbReference>
<dbReference type="NCBIfam" id="NF003260">
    <property type="entry name" value="PRK04223.1"/>
    <property type="match status" value="1"/>
</dbReference>
<dbReference type="NCBIfam" id="TIGR01038">
    <property type="entry name" value="uL22_arch_euk"/>
    <property type="match status" value="1"/>
</dbReference>
<dbReference type="PANTHER" id="PTHR11593">
    <property type="entry name" value="60S RIBOSOMAL PROTEIN L17"/>
    <property type="match status" value="1"/>
</dbReference>
<dbReference type="PANTHER" id="PTHR11593:SF10">
    <property type="entry name" value="60S RIBOSOMAL PROTEIN L17"/>
    <property type="match status" value="1"/>
</dbReference>
<dbReference type="Pfam" id="PF00237">
    <property type="entry name" value="Ribosomal_L22"/>
    <property type="match status" value="1"/>
</dbReference>
<dbReference type="SUPFAM" id="SSF54843">
    <property type="entry name" value="Ribosomal protein L22"/>
    <property type="match status" value="1"/>
</dbReference>
<dbReference type="PROSITE" id="PS00464">
    <property type="entry name" value="RIBOSOMAL_L22"/>
    <property type="match status" value="1"/>
</dbReference>
<comment type="similarity">
    <text evidence="1">Belongs to the universal ribosomal protein uL22 family.</text>
</comment>
<organism>
    <name type="scientific">Hordeum vulgare</name>
    <name type="common">Barley</name>
    <dbReference type="NCBI Taxonomy" id="4513"/>
    <lineage>
        <taxon>Eukaryota</taxon>
        <taxon>Viridiplantae</taxon>
        <taxon>Streptophyta</taxon>
        <taxon>Embryophyta</taxon>
        <taxon>Tracheophyta</taxon>
        <taxon>Spermatophyta</taxon>
        <taxon>Magnoliopsida</taxon>
        <taxon>Liliopsida</taxon>
        <taxon>Poales</taxon>
        <taxon>Poaceae</taxon>
        <taxon>BOP clade</taxon>
        <taxon>Pooideae</taxon>
        <taxon>Triticodae</taxon>
        <taxon>Triticeae</taxon>
        <taxon>Hordeinae</taxon>
        <taxon>Hordeum</taxon>
    </lineage>
</organism>
<protein>
    <recommendedName>
        <fullName evidence="1">Large ribosomal subunit protein uL22z</fullName>
    </recommendedName>
    <alternativeName>
        <fullName>60S ribosomal protein L17-1</fullName>
    </alternativeName>
</protein>